<feature type="chain" id="PRO_0000054750" description="Acetoacetyl-CoA reductase">
    <location>
        <begin position="1"/>
        <end position="241"/>
    </location>
</feature>
<feature type="active site" description="Proton acceptor" evidence="2">
    <location>
        <position position="147"/>
    </location>
</feature>
<feature type="binding site" evidence="1">
    <location>
        <begin position="12"/>
        <end position="14"/>
    </location>
    <ligand>
        <name>NADP(+)</name>
        <dbReference type="ChEBI" id="CHEBI:58349"/>
    </ligand>
</feature>
<feature type="binding site" evidence="1">
    <location>
        <position position="39"/>
    </location>
    <ligand>
        <name>NADP(+)</name>
        <dbReference type="ChEBI" id="CHEBI:58349"/>
    </ligand>
</feature>
<feature type="binding site" evidence="1">
    <location>
        <begin position="82"/>
        <end position="86"/>
    </location>
    <ligand>
        <name>NADP(+)</name>
        <dbReference type="ChEBI" id="CHEBI:58349"/>
    </ligand>
</feature>
<feature type="binding site" evidence="1">
    <location>
        <position position="88"/>
    </location>
    <ligand>
        <name>substrate</name>
    </ligand>
</feature>
<feature type="binding site" evidence="1">
    <location>
        <begin position="141"/>
        <end position="144"/>
    </location>
    <ligand>
        <name>substrate</name>
    </ligand>
</feature>
<feature type="binding site" evidence="1">
    <location>
        <begin position="177"/>
        <end position="180"/>
    </location>
    <ligand>
        <name>NADP(+)</name>
        <dbReference type="ChEBI" id="CHEBI:58349"/>
    </ligand>
</feature>
<feature type="binding site" evidence="1">
    <location>
        <begin position="178"/>
        <end position="179"/>
    </location>
    <ligand>
        <name>substrate</name>
    </ligand>
</feature>
<evidence type="ECO:0000250" key="1">
    <source>
        <dbReference type="UniProtKB" id="P14697"/>
    </source>
</evidence>
<evidence type="ECO:0000255" key="2">
    <source>
        <dbReference type="PROSITE-ProRule" id="PRU10001"/>
    </source>
</evidence>
<evidence type="ECO:0000303" key="3">
    <source>
    </source>
</evidence>
<evidence type="ECO:0000305" key="4"/>
<keyword id="KW-0963">Cytoplasm</keyword>
<keyword id="KW-0521">NADP</keyword>
<keyword id="KW-0560">Oxidoreductase</keyword>
<keyword id="KW-0583">PHB biosynthesis</keyword>
<keyword id="KW-1185">Reference proteome</keyword>
<protein>
    <recommendedName>
        <fullName>Acetoacetyl-CoA reductase</fullName>
        <ecNumber>1.1.1.36</ecNumber>
    </recommendedName>
</protein>
<organism>
    <name type="scientific">Rhizobium meliloti (strain 1021)</name>
    <name type="common">Ensifer meliloti</name>
    <name type="synonym">Sinorhizobium meliloti</name>
    <dbReference type="NCBI Taxonomy" id="266834"/>
    <lineage>
        <taxon>Bacteria</taxon>
        <taxon>Pseudomonadati</taxon>
        <taxon>Pseudomonadota</taxon>
        <taxon>Alphaproteobacteria</taxon>
        <taxon>Hyphomicrobiales</taxon>
        <taxon>Rhizobiaceae</taxon>
        <taxon>Sinorhizobium/Ensifer group</taxon>
        <taxon>Sinorhizobium</taxon>
    </lineage>
</organism>
<gene>
    <name evidence="3" type="primary">phaB</name>
    <name type="ordered locus">R03261</name>
    <name type="ORF">SMc03878</name>
</gene>
<proteinExistence type="inferred from homology"/>
<reference key="1">
    <citation type="journal article" date="1995" name="Microbiology">
        <title>Poly-beta-hydroxybutyrate (PHB) biosynthetic genes in Rhizobium meliloti 41.</title>
        <authorList>
            <person name="Tombolini R."/>
            <person name="Povolo S."/>
            <person name="Buson A."/>
            <person name="Squartini A."/>
            <person name="Nuti M.P."/>
        </authorList>
    </citation>
    <scope>NUCLEOTIDE SEQUENCE [GENOMIC DNA]</scope>
    <source>
        <strain>41</strain>
    </source>
</reference>
<reference key="2">
    <citation type="journal article" date="2001" name="Proc. Natl. Acad. Sci. U.S.A.">
        <title>Analysis of the chromosome sequence of the legume symbiont Sinorhizobium meliloti strain 1021.</title>
        <authorList>
            <person name="Capela D."/>
            <person name="Barloy-Hubler F."/>
            <person name="Gouzy J."/>
            <person name="Bothe G."/>
            <person name="Ampe F."/>
            <person name="Batut J."/>
            <person name="Boistard P."/>
            <person name="Becker A."/>
            <person name="Boutry M."/>
            <person name="Cadieu E."/>
            <person name="Dreano S."/>
            <person name="Gloux S."/>
            <person name="Godrie T."/>
            <person name="Goffeau A."/>
            <person name="Kahn D."/>
            <person name="Kiss E."/>
            <person name="Lelaure V."/>
            <person name="Masuy D."/>
            <person name="Pohl T."/>
            <person name="Portetelle D."/>
            <person name="Puehler A."/>
            <person name="Purnelle B."/>
            <person name="Ramsperger U."/>
            <person name="Renard C."/>
            <person name="Thebault P."/>
            <person name="Vandenbol M."/>
            <person name="Weidner S."/>
            <person name="Galibert F."/>
        </authorList>
    </citation>
    <scope>NUCLEOTIDE SEQUENCE [LARGE SCALE GENOMIC DNA]</scope>
    <source>
        <strain>1021</strain>
    </source>
</reference>
<reference key="3">
    <citation type="journal article" date="2001" name="Science">
        <title>The composite genome of the legume symbiont Sinorhizobium meliloti.</title>
        <authorList>
            <person name="Galibert F."/>
            <person name="Finan T.M."/>
            <person name="Long S.R."/>
            <person name="Puehler A."/>
            <person name="Abola P."/>
            <person name="Ampe F."/>
            <person name="Barloy-Hubler F."/>
            <person name="Barnett M.J."/>
            <person name="Becker A."/>
            <person name="Boistard P."/>
            <person name="Bothe G."/>
            <person name="Boutry M."/>
            <person name="Bowser L."/>
            <person name="Buhrmester J."/>
            <person name="Cadieu E."/>
            <person name="Capela D."/>
            <person name="Chain P."/>
            <person name="Cowie A."/>
            <person name="Davis R.W."/>
            <person name="Dreano S."/>
            <person name="Federspiel N.A."/>
            <person name="Fisher R.F."/>
            <person name="Gloux S."/>
            <person name="Godrie T."/>
            <person name="Goffeau A."/>
            <person name="Golding B."/>
            <person name="Gouzy J."/>
            <person name="Gurjal M."/>
            <person name="Hernandez-Lucas I."/>
            <person name="Hong A."/>
            <person name="Huizar L."/>
            <person name="Hyman R.W."/>
            <person name="Jones T."/>
            <person name="Kahn D."/>
            <person name="Kahn M.L."/>
            <person name="Kalman S."/>
            <person name="Keating D.H."/>
            <person name="Kiss E."/>
            <person name="Komp C."/>
            <person name="Lelaure V."/>
            <person name="Masuy D."/>
            <person name="Palm C."/>
            <person name="Peck M.C."/>
            <person name="Pohl T.M."/>
            <person name="Portetelle D."/>
            <person name="Purnelle B."/>
            <person name="Ramsperger U."/>
            <person name="Surzycki R."/>
            <person name="Thebault P."/>
            <person name="Vandenbol M."/>
            <person name="Vorhoelter F.J."/>
            <person name="Weidner S."/>
            <person name="Wells D.H."/>
            <person name="Wong K."/>
            <person name="Yeh K.-C."/>
            <person name="Batut J."/>
        </authorList>
    </citation>
    <scope>NUCLEOTIDE SEQUENCE [LARGE SCALE GENOMIC DNA]</scope>
    <source>
        <strain>1021</strain>
    </source>
</reference>
<reference key="4">
    <citation type="journal article" date="1992" name="FEMS Microbiol. Rev.">
        <title>Molecular basis for biosynthesis and accumulation of polyhydroxyalkanoic acids in bacteria.</title>
        <authorList>
            <person name="Steinbuechel A."/>
            <person name="Hustede E."/>
            <person name="Liebergesell M."/>
            <person name="Pieper U."/>
            <person name="Timm A."/>
            <person name="Valentin H."/>
        </authorList>
    </citation>
    <scope>GENE NAME</scope>
</reference>
<accession>P50205</accession>
<dbReference type="EC" id="1.1.1.36"/>
<dbReference type="EMBL" id="U17226">
    <property type="protein sequence ID" value="AAA90983.1"/>
    <property type="molecule type" value="Genomic_DNA"/>
</dbReference>
<dbReference type="EMBL" id="AL591688">
    <property type="protein sequence ID" value="CAC47840.1"/>
    <property type="molecule type" value="Genomic_DNA"/>
</dbReference>
<dbReference type="RefSeq" id="NP_387367.1">
    <property type="nucleotide sequence ID" value="NC_003047.1"/>
</dbReference>
<dbReference type="RefSeq" id="WP_003535773.1">
    <property type="nucleotide sequence ID" value="NC_003047.1"/>
</dbReference>
<dbReference type="SMR" id="P50205"/>
<dbReference type="EnsemblBacteria" id="CAC47840">
    <property type="protein sequence ID" value="CAC47840"/>
    <property type="gene ID" value="SMc03878"/>
</dbReference>
<dbReference type="KEGG" id="sme:SMc03878"/>
<dbReference type="PATRIC" id="fig|266834.11.peg.4815"/>
<dbReference type="eggNOG" id="COG1028">
    <property type="taxonomic scope" value="Bacteria"/>
</dbReference>
<dbReference type="HOGENOM" id="CLU_010194_1_3_5"/>
<dbReference type="OrthoDB" id="9804774at2"/>
<dbReference type="UniPathway" id="UPA00917"/>
<dbReference type="Proteomes" id="UP000001976">
    <property type="component" value="Chromosome"/>
</dbReference>
<dbReference type="GO" id="GO:0005737">
    <property type="term" value="C:cytoplasm"/>
    <property type="evidence" value="ECO:0007669"/>
    <property type="project" value="UniProtKB-SubCell"/>
</dbReference>
<dbReference type="GO" id="GO:0018454">
    <property type="term" value="F:acetoacetyl-CoA reductase activity"/>
    <property type="evidence" value="ECO:0007669"/>
    <property type="project" value="UniProtKB-EC"/>
</dbReference>
<dbReference type="GO" id="GO:0006629">
    <property type="term" value="P:lipid metabolic process"/>
    <property type="evidence" value="ECO:0007669"/>
    <property type="project" value="UniProtKB-ARBA"/>
</dbReference>
<dbReference type="GO" id="GO:0032787">
    <property type="term" value="P:monocarboxylic acid metabolic process"/>
    <property type="evidence" value="ECO:0007669"/>
    <property type="project" value="UniProtKB-ARBA"/>
</dbReference>
<dbReference type="GO" id="GO:0042619">
    <property type="term" value="P:poly-hydroxybutyrate biosynthetic process"/>
    <property type="evidence" value="ECO:0007669"/>
    <property type="project" value="UniProtKB-KW"/>
</dbReference>
<dbReference type="CDD" id="cd05333">
    <property type="entry name" value="BKR_SDR_c"/>
    <property type="match status" value="1"/>
</dbReference>
<dbReference type="FunFam" id="3.40.50.720:FF:000173">
    <property type="entry name" value="3-oxoacyl-[acyl-carrier protein] reductase"/>
    <property type="match status" value="1"/>
</dbReference>
<dbReference type="Gene3D" id="3.40.50.720">
    <property type="entry name" value="NAD(P)-binding Rossmann-like Domain"/>
    <property type="match status" value="1"/>
</dbReference>
<dbReference type="InterPro" id="IPR011283">
    <property type="entry name" value="Acetoacetyl-CoA_reductase"/>
</dbReference>
<dbReference type="InterPro" id="IPR036291">
    <property type="entry name" value="NAD(P)-bd_dom_sf"/>
</dbReference>
<dbReference type="InterPro" id="IPR020904">
    <property type="entry name" value="Sc_DH/Rdtase_CS"/>
</dbReference>
<dbReference type="InterPro" id="IPR050259">
    <property type="entry name" value="SDR"/>
</dbReference>
<dbReference type="InterPro" id="IPR002347">
    <property type="entry name" value="SDR_fam"/>
</dbReference>
<dbReference type="NCBIfam" id="TIGR01829">
    <property type="entry name" value="AcAcCoA_reduct"/>
    <property type="match status" value="1"/>
</dbReference>
<dbReference type="NCBIfam" id="NF009464">
    <property type="entry name" value="PRK12824.1"/>
    <property type="match status" value="1"/>
</dbReference>
<dbReference type="NCBIfam" id="NF009466">
    <property type="entry name" value="PRK12826.1-2"/>
    <property type="match status" value="1"/>
</dbReference>
<dbReference type="PANTHER" id="PTHR42879">
    <property type="entry name" value="3-OXOACYL-(ACYL-CARRIER-PROTEIN) REDUCTASE"/>
    <property type="match status" value="1"/>
</dbReference>
<dbReference type="PANTHER" id="PTHR42879:SF2">
    <property type="entry name" value="3-OXOACYL-[ACYL-CARRIER-PROTEIN] REDUCTASE FABG"/>
    <property type="match status" value="1"/>
</dbReference>
<dbReference type="Pfam" id="PF13561">
    <property type="entry name" value="adh_short_C2"/>
    <property type="match status" value="1"/>
</dbReference>
<dbReference type="PRINTS" id="PR00081">
    <property type="entry name" value="GDHRDH"/>
</dbReference>
<dbReference type="PRINTS" id="PR00080">
    <property type="entry name" value="SDRFAMILY"/>
</dbReference>
<dbReference type="SMART" id="SM00822">
    <property type="entry name" value="PKS_KR"/>
    <property type="match status" value="1"/>
</dbReference>
<dbReference type="SUPFAM" id="SSF51735">
    <property type="entry name" value="NAD(P)-binding Rossmann-fold domains"/>
    <property type="match status" value="1"/>
</dbReference>
<dbReference type="PROSITE" id="PS00061">
    <property type="entry name" value="ADH_SHORT"/>
    <property type="match status" value="1"/>
</dbReference>
<sequence>MSRVALVTGGSRGIGAAICVALKAAGYKVAANYAGNDERAKAFEQESGIPVYKWDVSSYQACVDGIARVEADLGPVDILVNNAGITRDAMFHKMTPEQWGEVIGTNLTGVFNMTHPLWSGMRDRGFGRIVNISSINGQKGQMGQVNYSAAKAGDLGLTKALAQEGAAKGITVNAICPGYIGTEMVRAVPEKVLNERIIPQIPVGRLGEPEEVARCVVFLASDDAGFITGSTISANGGQYFA</sequence>
<comment type="catalytic activity">
    <reaction>
        <text>a (3R)-3-hydroxyacyl-CoA + NADP(+) = a 3-oxoacyl-CoA + NADPH + H(+)</text>
        <dbReference type="Rhea" id="RHEA:22256"/>
        <dbReference type="ChEBI" id="CHEBI:15378"/>
        <dbReference type="ChEBI" id="CHEBI:57319"/>
        <dbReference type="ChEBI" id="CHEBI:57783"/>
        <dbReference type="ChEBI" id="CHEBI:58349"/>
        <dbReference type="ChEBI" id="CHEBI:90726"/>
        <dbReference type="EC" id="1.1.1.36"/>
    </reaction>
</comment>
<comment type="pathway">
    <text>Biopolymer metabolism; poly-(R)-3-hydroxybutanoate biosynthesis.</text>
</comment>
<comment type="subcellular location">
    <subcellularLocation>
        <location>Cytoplasm</location>
    </subcellularLocation>
</comment>
<comment type="similarity">
    <text evidence="4">Belongs to the short-chain dehydrogenases/reductases (SDR) family.</text>
</comment>
<name>PHAB_RHIME</name>